<keyword id="KW-1003">Cell membrane</keyword>
<keyword id="KW-0325">Glycoprotein</keyword>
<keyword id="KW-0472">Membrane</keyword>
<keyword id="KW-0597">Phosphoprotein</keyword>
<keyword id="KW-1185">Reference proteome</keyword>
<keyword id="KW-0812">Transmembrane</keyword>
<keyword id="KW-1133">Transmembrane helix</keyword>
<accession>Q8CGA3</accession>
<accession>Q5CD76</accession>
<proteinExistence type="evidence at protein level"/>
<protein>
    <recommendedName>
        <fullName evidence="8">Large neutral amino acids transporter small subunit 4</fullName>
    </recommendedName>
    <alternativeName>
        <fullName>L-type amino acid transporter 4</fullName>
    </alternativeName>
    <alternativeName>
        <fullName>Solute carrier family 43 member 2</fullName>
    </alternativeName>
</protein>
<name>LAT4_MOUSE</name>
<gene>
    <name evidence="11" type="primary">Slc43a2</name>
    <name type="synonym">Lat4</name>
</gene>
<sequence>MAPTLATAHRRRWWMACTAVLENLLFSAVLLGWGSLLIMLKSEGFYSYLCTKPENVTNSTVGGSAEPEPEELSLVNGWLSCKAQDEILNLAFTVGSFLLSAITLPLGIIMDKYGPRKLRLLGSACFAVSCLLIAYGASNPDSLSVLIFIALALNGFGGMCMTFTSLTLPNMFGDLRSTFIALMIGSYASSAVTFPGIKLIYDAGASFIGILVVWAGCSGLVFFNCFFNWPLEPFPGPEDMDYSVKIKFSWLGFDHKITGKQFYKQVTTVGRRLSVGSSMRTAKEQAALQEGHKLCLSTVDLEVKCQPDAAAAPSFMHSVFSPLLVLSLVTMCVTQLRLIFYMGAMNSILEFLVRGDQKTVALYTSIFGALQLLCLLTAPVIGYIMDWKLKECEDTSEEPEEKEGTQGEKKQKRDRQIQKVTNAMRAFAFTNVLLVGFGVTCLIPNLPLQIFSFVLHTIVRGFIHSAVGGLYAAVYPSTQFGSLTGLQSLVSALFALLQQPLYLAMMGPLGGDPLWVNVGLLAMSMLGFCLPLYLICYRRQLERQLQQKREDSKLFLKINGSSNREAFV</sequence>
<comment type="function">
    <text evidence="4 5">Uniporter that mediates the transport of the stereospecific L-phenylalanine, L-methionine and L-branched-chain amino acids, between the extracellular space and the cytoplasm and may control the transepithelial (re)absorption of neutral amino acid in kidney and small intestine (PubMed:15659399, PubMed:25480797). Transport activity is mediated through facilitated diffusion and is sodium ions-, chloride ions- and pH-independent (PubMed:25480797).</text>
</comment>
<comment type="catalytic activity">
    <reaction evidence="5 9">
        <text>L-phenylalanine(in) = L-phenylalanine(out)</text>
        <dbReference type="Rhea" id="RHEA:27950"/>
        <dbReference type="ChEBI" id="CHEBI:58095"/>
    </reaction>
</comment>
<comment type="catalytic activity">
    <reaction evidence="10">
        <text>L-leucine(in) = L-leucine(out)</text>
        <dbReference type="Rhea" id="RHEA:73011"/>
        <dbReference type="ChEBI" id="CHEBI:57427"/>
    </reaction>
</comment>
<comment type="catalytic activity">
    <reaction evidence="1">
        <text>L-isoleucine(in) = L-isoleucine(out)</text>
        <dbReference type="Rhea" id="RHEA:70943"/>
        <dbReference type="ChEBI" id="CHEBI:58045"/>
    </reaction>
</comment>
<comment type="catalytic activity">
    <reaction evidence="1">
        <text>L-methionine(in) = L-methionine(out)</text>
        <dbReference type="Rhea" id="RHEA:70939"/>
        <dbReference type="ChEBI" id="CHEBI:57844"/>
    </reaction>
</comment>
<comment type="activity regulation">
    <text evidence="1">Affinity and transport activity are regulated by a phosphorylation switch state at Ser-274 and Ser-297; increasing of affinity and amino acid transport activity via dephosphorylation at Ser-274 and phosphorylation at Ser-297.</text>
</comment>
<comment type="subcellular location">
    <subcellularLocation>
        <location evidence="4">Cell membrane</location>
        <topology evidence="2">Multi-pass membrane protein</topology>
    </subcellularLocation>
    <subcellularLocation>
        <location evidence="5 6">Basolateral cell membrane</location>
    </subcellularLocation>
    <text evidence="5 6">Located at the basolateral membrane in the small intestine enterocytes, kidney proximal tubule, thick ascending limb and, to a minor extent, of distal convoluted tubule epithelial cells.</text>
</comment>
<comment type="tissue specificity">
    <text evidence="4 5">Expressed in intestine, kidney, brain and adipose tissue, heart and testis (PubMed:15659399). In the kidney, is detected in epithelial cells of the distal tubule and collecting duct (PubMed:15659399). In the intestine, is expressed mainly in crypt cells of the intestinal microvilli and epithelial cells in the base of the villus (PubMed:15659399). Expressed in small intestine enterocytes, the kidney proximal tubule, thick ascending limb and, to a minor extent, of distal convoluted tubule epithelial cells (PubMed:25480797).</text>
</comment>
<comment type="induction">
    <text evidence="7">Regulated by protein diet.</text>
</comment>
<comment type="PTM">
    <text evidence="4">Glycosylated.</text>
</comment>
<comment type="PTM">
    <text evidence="6 7">Dephosphorylation at Ser-274 and phosphorylation at Ser-297 increase affinity and amino acid transport activity (PubMed:30379325). Phosphorylation-dephosphorylation cycle is regulated by food-entrained diurnal rhythm and dietary proteins (PubMed:32470053).</text>
</comment>
<comment type="disruption phenotype">
    <text evidence="5">Homozygous knockout fetuses mice for SLC43A2 display a reduced intrauterine growth not leading to a prenatal lethality. In addition, fetuses mice show a marked reduction in the concentration of almost all amino acids in the amniotic fluid (PubMed:25480797). Pups show growth defect, metabolic alterations and early postnatal lethality (PubMed:25480797).</text>
</comment>
<comment type="similarity">
    <text evidence="8">Belongs to the SLC43A transporter (TC 2.A.1.44) family.</text>
</comment>
<reference key="1">
    <citation type="journal article" date="2005" name="J. Biol. Chem.">
        <title>Identification of LAT4, a novel amino acid transporter with system L activity.</title>
        <authorList>
            <person name="Bodoy S."/>
            <person name="Martin L."/>
            <person name="Zorzano A."/>
            <person name="Palacin M."/>
            <person name="Estevez R."/>
            <person name="Bertran J."/>
        </authorList>
    </citation>
    <scope>NUCLEOTIDE SEQUENCE [MRNA]</scope>
    <scope>FUNCTION</scope>
    <scope>CATALYTIC ACTIVITY</scope>
    <scope>SUBCELLULAR LOCATION</scope>
    <scope>TISSUE SPECIFICITY</scope>
    <scope>GLYCOSYLATION</scope>
    <source>
        <strain>FVB/N</strain>
    </source>
</reference>
<reference key="2">
    <citation type="submission" date="2003-09" db="EMBL/GenBank/DDBJ databases">
        <title>Identification of a novel epithelial type neutral amino acid transporter with the properties of system L2.</title>
        <authorList>
            <person name="Chairoungdua A."/>
            <person name="Kanai Y."/>
            <person name="Babu E."/>
            <person name="Iribe Y."/>
            <person name="Kim D."/>
            <person name="Tangtrongsup S."/>
            <person name="Jutabha P."/>
            <person name="Li Y."/>
            <person name="Anzai N."/>
            <person name="Endou H."/>
        </authorList>
    </citation>
    <scope>NUCLEOTIDE SEQUENCE [MRNA]</scope>
    <source>
        <tissue>Kidney</tissue>
    </source>
</reference>
<reference key="3">
    <citation type="journal article" date="2005" name="Science">
        <title>The transcriptional landscape of the mammalian genome.</title>
        <authorList>
            <person name="Carninci P."/>
            <person name="Kasukawa T."/>
            <person name="Katayama S."/>
            <person name="Gough J."/>
            <person name="Frith M.C."/>
            <person name="Maeda N."/>
            <person name="Oyama R."/>
            <person name="Ravasi T."/>
            <person name="Lenhard B."/>
            <person name="Wells C."/>
            <person name="Kodzius R."/>
            <person name="Shimokawa K."/>
            <person name="Bajic V.B."/>
            <person name="Brenner S.E."/>
            <person name="Batalov S."/>
            <person name="Forrest A.R."/>
            <person name="Zavolan M."/>
            <person name="Davis M.J."/>
            <person name="Wilming L.G."/>
            <person name="Aidinis V."/>
            <person name="Allen J.E."/>
            <person name="Ambesi-Impiombato A."/>
            <person name="Apweiler R."/>
            <person name="Aturaliya R.N."/>
            <person name="Bailey T.L."/>
            <person name="Bansal M."/>
            <person name="Baxter L."/>
            <person name="Beisel K.W."/>
            <person name="Bersano T."/>
            <person name="Bono H."/>
            <person name="Chalk A.M."/>
            <person name="Chiu K.P."/>
            <person name="Choudhary V."/>
            <person name="Christoffels A."/>
            <person name="Clutterbuck D.R."/>
            <person name="Crowe M.L."/>
            <person name="Dalla E."/>
            <person name="Dalrymple B.P."/>
            <person name="de Bono B."/>
            <person name="Della Gatta G."/>
            <person name="di Bernardo D."/>
            <person name="Down T."/>
            <person name="Engstrom P."/>
            <person name="Fagiolini M."/>
            <person name="Faulkner G."/>
            <person name="Fletcher C.F."/>
            <person name="Fukushima T."/>
            <person name="Furuno M."/>
            <person name="Futaki S."/>
            <person name="Gariboldi M."/>
            <person name="Georgii-Hemming P."/>
            <person name="Gingeras T.R."/>
            <person name="Gojobori T."/>
            <person name="Green R.E."/>
            <person name="Gustincich S."/>
            <person name="Harbers M."/>
            <person name="Hayashi Y."/>
            <person name="Hensch T.K."/>
            <person name="Hirokawa N."/>
            <person name="Hill D."/>
            <person name="Huminiecki L."/>
            <person name="Iacono M."/>
            <person name="Ikeo K."/>
            <person name="Iwama A."/>
            <person name="Ishikawa T."/>
            <person name="Jakt M."/>
            <person name="Kanapin A."/>
            <person name="Katoh M."/>
            <person name="Kawasawa Y."/>
            <person name="Kelso J."/>
            <person name="Kitamura H."/>
            <person name="Kitano H."/>
            <person name="Kollias G."/>
            <person name="Krishnan S.P."/>
            <person name="Kruger A."/>
            <person name="Kummerfeld S.K."/>
            <person name="Kurochkin I.V."/>
            <person name="Lareau L.F."/>
            <person name="Lazarevic D."/>
            <person name="Lipovich L."/>
            <person name="Liu J."/>
            <person name="Liuni S."/>
            <person name="McWilliam S."/>
            <person name="Madan Babu M."/>
            <person name="Madera M."/>
            <person name="Marchionni L."/>
            <person name="Matsuda H."/>
            <person name="Matsuzawa S."/>
            <person name="Miki H."/>
            <person name="Mignone F."/>
            <person name="Miyake S."/>
            <person name="Morris K."/>
            <person name="Mottagui-Tabar S."/>
            <person name="Mulder N."/>
            <person name="Nakano N."/>
            <person name="Nakauchi H."/>
            <person name="Ng P."/>
            <person name="Nilsson R."/>
            <person name="Nishiguchi S."/>
            <person name="Nishikawa S."/>
            <person name="Nori F."/>
            <person name="Ohara O."/>
            <person name="Okazaki Y."/>
            <person name="Orlando V."/>
            <person name="Pang K.C."/>
            <person name="Pavan W.J."/>
            <person name="Pavesi G."/>
            <person name="Pesole G."/>
            <person name="Petrovsky N."/>
            <person name="Piazza S."/>
            <person name="Reed J."/>
            <person name="Reid J.F."/>
            <person name="Ring B.Z."/>
            <person name="Ringwald M."/>
            <person name="Rost B."/>
            <person name="Ruan Y."/>
            <person name="Salzberg S.L."/>
            <person name="Sandelin A."/>
            <person name="Schneider C."/>
            <person name="Schoenbach C."/>
            <person name="Sekiguchi K."/>
            <person name="Semple C.A."/>
            <person name="Seno S."/>
            <person name="Sessa L."/>
            <person name="Sheng Y."/>
            <person name="Shibata Y."/>
            <person name="Shimada H."/>
            <person name="Shimada K."/>
            <person name="Silva D."/>
            <person name="Sinclair B."/>
            <person name="Sperling S."/>
            <person name="Stupka E."/>
            <person name="Sugiura K."/>
            <person name="Sultana R."/>
            <person name="Takenaka Y."/>
            <person name="Taki K."/>
            <person name="Tammoja K."/>
            <person name="Tan S.L."/>
            <person name="Tang S."/>
            <person name="Taylor M.S."/>
            <person name="Tegner J."/>
            <person name="Teichmann S.A."/>
            <person name="Ueda H.R."/>
            <person name="van Nimwegen E."/>
            <person name="Verardo R."/>
            <person name="Wei C.L."/>
            <person name="Yagi K."/>
            <person name="Yamanishi H."/>
            <person name="Zabarovsky E."/>
            <person name="Zhu S."/>
            <person name="Zimmer A."/>
            <person name="Hide W."/>
            <person name="Bult C."/>
            <person name="Grimmond S.M."/>
            <person name="Teasdale R.D."/>
            <person name="Liu E.T."/>
            <person name="Brusic V."/>
            <person name="Quackenbush J."/>
            <person name="Wahlestedt C."/>
            <person name="Mattick J.S."/>
            <person name="Hume D.A."/>
            <person name="Kai C."/>
            <person name="Sasaki D."/>
            <person name="Tomaru Y."/>
            <person name="Fukuda S."/>
            <person name="Kanamori-Katayama M."/>
            <person name="Suzuki M."/>
            <person name="Aoki J."/>
            <person name="Arakawa T."/>
            <person name="Iida J."/>
            <person name="Imamura K."/>
            <person name="Itoh M."/>
            <person name="Kato T."/>
            <person name="Kawaji H."/>
            <person name="Kawagashira N."/>
            <person name="Kawashima T."/>
            <person name="Kojima M."/>
            <person name="Kondo S."/>
            <person name="Konno H."/>
            <person name="Nakano K."/>
            <person name="Ninomiya N."/>
            <person name="Nishio T."/>
            <person name="Okada M."/>
            <person name="Plessy C."/>
            <person name="Shibata K."/>
            <person name="Shiraki T."/>
            <person name="Suzuki S."/>
            <person name="Tagami M."/>
            <person name="Waki K."/>
            <person name="Watahiki A."/>
            <person name="Okamura-Oho Y."/>
            <person name="Suzuki H."/>
            <person name="Kawai J."/>
            <person name="Hayashizaki Y."/>
        </authorList>
    </citation>
    <scope>NUCLEOTIDE SEQUENCE [LARGE SCALE MRNA]</scope>
    <source>
        <strain>C57BL/6J</strain>
        <tissue>Spleen</tissue>
    </source>
</reference>
<reference key="4">
    <citation type="journal article" date="2009" name="PLoS Biol.">
        <title>Lineage-specific biology revealed by a finished genome assembly of the mouse.</title>
        <authorList>
            <person name="Church D.M."/>
            <person name="Goodstadt L."/>
            <person name="Hillier L.W."/>
            <person name="Zody M.C."/>
            <person name="Goldstein S."/>
            <person name="She X."/>
            <person name="Bult C.J."/>
            <person name="Agarwala R."/>
            <person name="Cherry J.L."/>
            <person name="DiCuccio M."/>
            <person name="Hlavina W."/>
            <person name="Kapustin Y."/>
            <person name="Meric P."/>
            <person name="Maglott D."/>
            <person name="Birtle Z."/>
            <person name="Marques A.C."/>
            <person name="Graves T."/>
            <person name="Zhou S."/>
            <person name="Teague B."/>
            <person name="Potamousis K."/>
            <person name="Churas C."/>
            <person name="Place M."/>
            <person name="Herschleb J."/>
            <person name="Runnheim R."/>
            <person name="Forrest D."/>
            <person name="Amos-Landgraf J."/>
            <person name="Schwartz D.C."/>
            <person name="Cheng Z."/>
            <person name="Lindblad-Toh K."/>
            <person name="Eichler E.E."/>
            <person name="Ponting C.P."/>
        </authorList>
    </citation>
    <scope>NUCLEOTIDE SEQUENCE [LARGE SCALE GENOMIC DNA]</scope>
    <source>
        <strain>C57BL/6J</strain>
    </source>
</reference>
<reference key="5">
    <citation type="journal article" date="2004" name="Genome Res.">
        <title>The status, quality, and expansion of the NIH full-length cDNA project: the Mammalian Gene Collection (MGC).</title>
        <authorList>
            <consortium name="The MGC Project Team"/>
        </authorList>
    </citation>
    <scope>NUCLEOTIDE SEQUENCE [LARGE SCALE MRNA]</scope>
</reference>
<reference key="6">
    <citation type="journal article" date="2009" name="Immunity">
        <title>The phagosomal proteome in interferon-gamma-activated macrophages.</title>
        <authorList>
            <person name="Trost M."/>
            <person name="English L."/>
            <person name="Lemieux S."/>
            <person name="Courcelles M."/>
            <person name="Desjardins M."/>
            <person name="Thibault P."/>
        </authorList>
    </citation>
    <scope>PHOSPHORYLATION [LARGE SCALE ANALYSIS] AT SER-297</scope>
    <scope>IDENTIFICATION BY MASS SPECTROMETRY [LARGE SCALE ANALYSIS]</scope>
</reference>
<reference key="7">
    <citation type="journal article" date="2010" name="Cell">
        <title>A tissue-specific atlas of mouse protein phosphorylation and expression.</title>
        <authorList>
            <person name="Huttlin E.L."/>
            <person name="Jedrychowski M.P."/>
            <person name="Elias J.E."/>
            <person name="Goswami T."/>
            <person name="Rad R."/>
            <person name="Beausoleil S.A."/>
            <person name="Villen J."/>
            <person name="Haas W."/>
            <person name="Sowa M.E."/>
            <person name="Gygi S.P."/>
        </authorList>
    </citation>
    <scope>PHOSPHORYLATION [LARGE SCALE ANALYSIS] AT SER-297</scope>
    <scope>IDENTIFICATION BY MASS SPECTROMETRY [LARGE SCALE ANALYSIS]</scope>
    <source>
        <tissue>Brain</tissue>
        <tissue>Brown adipose tissue</tissue>
        <tissue>Kidney</tissue>
        <tissue>Pancreas</tissue>
        <tissue>Spleen</tissue>
    </source>
</reference>
<reference key="8">
    <citation type="journal article" date="2015" name="J. Physiol. (Lond.)">
        <title>Essential amino acid transporter Lat4 (Slc43a2) is required for mouse development.</title>
        <authorList>
            <person name="Guetg A."/>
            <person name="Mariotta L."/>
            <person name="Bock L."/>
            <person name="Herzog B."/>
            <person name="Fingerhut R."/>
            <person name="Camargo S.M."/>
            <person name="Verrey F."/>
        </authorList>
    </citation>
    <scope>FUNCTION</scope>
    <scope>TRANSPORTER ACTIVITY</scope>
    <scope>SUBCELLULAR LOCATION</scope>
    <scope>DISRUPTION PHENOTYPE</scope>
    <scope>TISSUE SPECIFICITY</scope>
</reference>
<reference key="9">
    <citation type="journal article" date="2019" name="J. Physiol. (Lond.)">
        <title>Anticipation of food intake induces phosphorylation switch to regulate basolateral amino acid transporter LAT4 (SLC43A2) function.</title>
        <authorList>
            <person name="Oparija L."/>
            <person name="Rajendran A."/>
            <person name="Poncet N."/>
            <person name="Verrey F."/>
        </authorList>
    </citation>
    <scope>SUBCELLULAR LOCATION</scope>
    <scope>PHOSPHORYLATION AT SER-274 AND SER-297</scope>
</reference>
<reference key="10">
    <citation type="journal article" date="2020" name="PLoS ONE">
        <title>Phosphorylation of mouse intestinal basolateral amino acid uniporter LAT4 is controlled by food-entrained diurnal rhythm and dietary proteins.</title>
        <authorList>
            <person name="Oparija-Rogenmozere L."/>
            <person name="Rajendran A."/>
            <person name="Poncet N."/>
            <person name="Camargo S.M.R."/>
            <person name="Verrey F."/>
        </authorList>
    </citation>
    <scope>PHOSPHORYLATION AT SER-274 AND SER-297</scope>
    <scope>INDUCTION</scope>
</reference>
<feature type="chain" id="PRO_0000307273" description="Large neutral amino acids transporter small subunit 4">
    <location>
        <begin position="1"/>
        <end position="568"/>
    </location>
</feature>
<feature type="transmembrane region" description="Helical" evidence="2">
    <location>
        <begin position="20"/>
        <end position="40"/>
    </location>
</feature>
<feature type="transmembrane region" description="Helical" evidence="2">
    <location>
        <begin position="90"/>
        <end position="110"/>
    </location>
</feature>
<feature type="transmembrane region" description="Helical" evidence="2">
    <location>
        <begin position="120"/>
        <end position="140"/>
    </location>
</feature>
<feature type="transmembrane region" description="Helical" evidence="2">
    <location>
        <begin position="143"/>
        <end position="163"/>
    </location>
</feature>
<feature type="transmembrane region" description="Helical" evidence="2">
    <location>
        <begin position="177"/>
        <end position="197"/>
    </location>
</feature>
<feature type="transmembrane region" description="Helical" evidence="2">
    <location>
        <begin position="207"/>
        <end position="227"/>
    </location>
</feature>
<feature type="transmembrane region" description="Helical" evidence="2">
    <location>
        <begin position="319"/>
        <end position="341"/>
    </location>
</feature>
<feature type="transmembrane region" description="Helical" evidence="2">
    <location>
        <begin position="365"/>
        <end position="385"/>
    </location>
</feature>
<feature type="transmembrane region" description="Helical" evidence="2">
    <location>
        <begin position="434"/>
        <end position="454"/>
    </location>
</feature>
<feature type="transmembrane region" description="Helical" evidence="2">
    <location>
        <begin position="461"/>
        <end position="481"/>
    </location>
</feature>
<feature type="transmembrane region" description="Helical" evidence="2">
    <location>
        <begin position="489"/>
        <end position="509"/>
    </location>
</feature>
<feature type="transmembrane region" description="Helical" evidence="2">
    <location>
        <begin position="515"/>
        <end position="535"/>
    </location>
</feature>
<feature type="region of interest" description="Disordered" evidence="3">
    <location>
        <begin position="395"/>
        <end position="415"/>
    </location>
</feature>
<feature type="compositionally biased region" description="Basic and acidic residues" evidence="3">
    <location>
        <begin position="402"/>
        <end position="415"/>
    </location>
</feature>
<feature type="modified residue" description="Phosphoserine" evidence="6 7">
    <location>
        <position position="274"/>
    </location>
</feature>
<feature type="modified residue" description="Phosphoserine" evidence="1">
    <location>
        <position position="278"/>
    </location>
</feature>
<feature type="modified residue" description="Phosphoserine" evidence="6 7 12 13">
    <location>
        <position position="297"/>
    </location>
</feature>
<feature type="glycosylation site" description="N-linked (GlcNAc...) asparagine" evidence="2">
    <location>
        <position position="55"/>
    </location>
</feature>
<feature type="sequence conflict" description="In Ref. 2; BAD91090." evidence="8" ref="2">
    <original>P</original>
    <variation>S</variation>
    <location>
        <position position="237"/>
    </location>
</feature>
<feature type="sequence conflict" description="In Ref. 2; BAD91090." evidence="8" ref="2">
    <original>K</original>
    <variation>E</variation>
    <location>
        <position position="402"/>
    </location>
</feature>
<evidence type="ECO:0000250" key="1">
    <source>
        <dbReference type="UniProtKB" id="Q8N370"/>
    </source>
</evidence>
<evidence type="ECO:0000255" key="2"/>
<evidence type="ECO:0000256" key="3">
    <source>
        <dbReference type="SAM" id="MobiDB-lite"/>
    </source>
</evidence>
<evidence type="ECO:0000269" key="4">
    <source>
    </source>
</evidence>
<evidence type="ECO:0000269" key="5">
    <source>
    </source>
</evidence>
<evidence type="ECO:0000269" key="6">
    <source>
    </source>
</evidence>
<evidence type="ECO:0000269" key="7">
    <source>
    </source>
</evidence>
<evidence type="ECO:0000305" key="8"/>
<evidence type="ECO:0000305" key="9">
    <source>
    </source>
</evidence>
<evidence type="ECO:0000305" key="10">
    <source>
    </source>
</evidence>
<evidence type="ECO:0000312" key="11">
    <source>
        <dbReference type="MGI" id="MGI:2442746"/>
    </source>
</evidence>
<evidence type="ECO:0007744" key="12">
    <source>
    </source>
</evidence>
<evidence type="ECO:0007744" key="13">
    <source>
    </source>
</evidence>
<organism>
    <name type="scientific">Mus musculus</name>
    <name type="common">Mouse</name>
    <dbReference type="NCBI Taxonomy" id="10090"/>
    <lineage>
        <taxon>Eukaryota</taxon>
        <taxon>Metazoa</taxon>
        <taxon>Chordata</taxon>
        <taxon>Craniata</taxon>
        <taxon>Vertebrata</taxon>
        <taxon>Euteleostomi</taxon>
        <taxon>Mammalia</taxon>
        <taxon>Eutheria</taxon>
        <taxon>Euarchontoglires</taxon>
        <taxon>Glires</taxon>
        <taxon>Rodentia</taxon>
        <taxon>Myomorpha</taxon>
        <taxon>Muroidea</taxon>
        <taxon>Muridae</taxon>
        <taxon>Murinae</taxon>
        <taxon>Mus</taxon>
        <taxon>Mus</taxon>
    </lineage>
</organism>
<dbReference type="EMBL" id="BK005643">
    <property type="protein sequence ID" value="DAA05677.1"/>
    <property type="molecule type" value="mRNA"/>
</dbReference>
<dbReference type="EMBL" id="AB120363">
    <property type="protein sequence ID" value="BAD91090.1"/>
    <property type="molecule type" value="mRNA"/>
</dbReference>
<dbReference type="EMBL" id="AK143773">
    <property type="protein sequence ID" value="BAE25533.1"/>
    <property type="molecule type" value="mRNA"/>
</dbReference>
<dbReference type="EMBL" id="AK159144">
    <property type="protein sequence ID" value="BAE34852.1"/>
    <property type="molecule type" value="mRNA"/>
</dbReference>
<dbReference type="EMBL" id="AL591440">
    <property type="status" value="NOT_ANNOTATED_CDS"/>
    <property type="molecule type" value="Genomic_DNA"/>
</dbReference>
<dbReference type="EMBL" id="AL591496">
    <property type="status" value="NOT_ANNOTATED_CDS"/>
    <property type="molecule type" value="Genomic_DNA"/>
</dbReference>
<dbReference type="EMBL" id="BC042513">
    <property type="protein sequence ID" value="AAH42513.1"/>
    <property type="molecule type" value="mRNA"/>
</dbReference>
<dbReference type="CCDS" id="CCDS25051.1"/>
<dbReference type="RefSeq" id="NP_001186212.1">
    <property type="nucleotide sequence ID" value="NM_001199283.1"/>
</dbReference>
<dbReference type="RefSeq" id="NP_001186213.1">
    <property type="nucleotide sequence ID" value="NM_001199284.1"/>
</dbReference>
<dbReference type="RefSeq" id="NP_775564.1">
    <property type="nucleotide sequence ID" value="NM_173388.2"/>
</dbReference>
<dbReference type="RefSeq" id="XP_006532890.1">
    <property type="nucleotide sequence ID" value="XM_006532827.5"/>
</dbReference>
<dbReference type="RefSeq" id="XP_030101640.1">
    <property type="nucleotide sequence ID" value="XM_030245780.2"/>
</dbReference>
<dbReference type="RefSeq" id="XP_036012404.1">
    <property type="nucleotide sequence ID" value="XM_036156511.1"/>
</dbReference>
<dbReference type="BioGRID" id="229598">
    <property type="interactions" value="1"/>
</dbReference>
<dbReference type="FunCoup" id="Q8CGA3">
    <property type="interactions" value="196"/>
</dbReference>
<dbReference type="STRING" id="10090.ENSMUSP00000126838"/>
<dbReference type="GlyCosmos" id="Q8CGA3">
    <property type="glycosylation" value="1 site, No reported glycans"/>
</dbReference>
<dbReference type="GlyGen" id="Q8CGA3">
    <property type="glycosylation" value="1 site"/>
</dbReference>
<dbReference type="iPTMnet" id="Q8CGA3"/>
<dbReference type="PhosphoSitePlus" id="Q8CGA3"/>
<dbReference type="SwissPalm" id="Q8CGA3"/>
<dbReference type="jPOST" id="Q8CGA3"/>
<dbReference type="PaxDb" id="10090-ENSMUSP00000104071"/>
<dbReference type="PeptideAtlas" id="Q8CGA3"/>
<dbReference type="ProteomicsDB" id="264916"/>
<dbReference type="Antibodypedia" id="10476">
    <property type="antibodies" value="106 antibodies from 21 providers"/>
</dbReference>
<dbReference type="Ensembl" id="ENSMUST00000042561.14">
    <property type="protein sequence ID" value="ENSMUSP00000046074.8"/>
    <property type="gene ID" value="ENSMUSG00000038178.17"/>
</dbReference>
<dbReference type="Ensembl" id="ENSMUST00000108433.8">
    <property type="protein sequence ID" value="ENSMUSP00000104071.2"/>
    <property type="gene ID" value="ENSMUSG00000038178.17"/>
</dbReference>
<dbReference type="Ensembl" id="ENSMUST00000169547.9">
    <property type="protein sequence ID" value="ENSMUSP00000126838.3"/>
    <property type="gene ID" value="ENSMUSG00000038178.17"/>
</dbReference>
<dbReference type="GeneID" id="215113"/>
<dbReference type="KEGG" id="mmu:215113"/>
<dbReference type="UCSC" id="uc007keb.2">
    <property type="organism name" value="mouse"/>
</dbReference>
<dbReference type="AGR" id="MGI:2442746"/>
<dbReference type="CTD" id="124935"/>
<dbReference type="MGI" id="MGI:2442746">
    <property type="gene designation" value="Slc43a2"/>
</dbReference>
<dbReference type="VEuPathDB" id="HostDB:ENSMUSG00000038178"/>
<dbReference type="eggNOG" id="ENOG502QTQJ">
    <property type="taxonomic scope" value="Eukaryota"/>
</dbReference>
<dbReference type="GeneTree" id="ENSGT00940000153576"/>
<dbReference type="HOGENOM" id="CLU_035676_0_0_1"/>
<dbReference type="InParanoid" id="Q8CGA3"/>
<dbReference type="OMA" id="IQMLRLN"/>
<dbReference type="OrthoDB" id="330047at2759"/>
<dbReference type="PhylomeDB" id="Q8CGA3"/>
<dbReference type="TreeFam" id="TF328358"/>
<dbReference type="Reactome" id="R-MMU-352230">
    <property type="pathway name" value="Amino acid transport across the plasma membrane"/>
</dbReference>
<dbReference type="BioGRID-ORCS" id="215113">
    <property type="hits" value="4 hits in 79 CRISPR screens"/>
</dbReference>
<dbReference type="ChiTaRS" id="Slc43a2">
    <property type="organism name" value="mouse"/>
</dbReference>
<dbReference type="PRO" id="PR:Q8CGA3"/>
<dbReference type="Proteomes" id="UP000000589">
    <property type="component" value="Chromosome 11"/>
</dbReference>
<dbReference type="RNAct" id="Q8CGA3">
    <property type="molecule type" value="protein"/>
</dbReference>
<dbReference type="Bgee" id="ENSMUSG00000038178">
    <property type="expression patterns" value="Expressed in stroma of bone marrow and 236 other cell types or tissues"/>
</dbReference>
<dbReference type="ExpressionAtlas" id="Q8CGA3">
    <property type="expression patterns" value="baseline and differential"/>
</dbReference>
<dbReference type="GO" id="GO:0016323">
    <property type="term" value="C:basolateral plasma membrane"/>
    <property type="evidence" value="ECO:0000314"/>
    <property type="project" value="UniProtKB"/>
</dbReference>
<dbReference type="GO" id="GO:0005886">
    <property type="term" value="C:plasma membrane"/>
    <property type="evidence" value="ECO:0000314"/>
    <property type="project" value="MGI"/>
</dbReference>
<dbReference type="GO" id="GO:0015179">
    <property type="term" value="F:L-amino acid transmembrane transporter activity"/>
    <property type="evidence" value="ECO:0000314"/>
    <property type="project" value="MGI"/>
</dbReference>
<dbReference type="GO" id="GO:0015188">
    <property type="term" value="F:L-isoleucine transmembrane transporter activity"/>
    <property type="evidence" value="ECO:0000250"/>
    <property type="project" value="UniProtKB"/>
</dbReference>
<dbReference type="GO" id="GO:0015190">
    <property type="term" value="F:L-leucine transmembrane transporter activity"/>
    <property type="evidence" value="ECO:0000314"/>
    <property type="project" value="UniProtKB"/>
</dbReference>
<dbReference type="GO" id="GO:0015191">
    <property type="term" value="F:L-methionine transmembrane transporter activity"/>
    <property type="evidence" value="ECO:0000250"/>
    <property type="project" value="UniProtKB"/>
</dbReference>
<dbReference type="GO" id="GO:0015192">
    <property type="term" value="F:L-phenylalanine transmembrane transporter activity"/>
    <property type="evidence" value="ECO:0000314"/>
    <property type="project" value="UniProtKB"/>
</dbReference>
<dbReference type="GO" id="GO:0015818">
    <property type="term" value="P:isoleucine transport"/>
    <property type="evidence" value="ECO:0000250"/>
    <property type="project" value="UniProtKB"/>
</dbReference>
<dbReference type="GO" id="GO:0015807">
    <property type="term" value="P:L-amino acid transport"/>
    <property type="evidence" value="ECO:0000314"/>
    <property type="project" value="MGI"/>
</dbReference>
<dbReference type="GO" id="GO:0015820">
    <property type="term" value="P:L-leucine transport"/>
    <property type="evidence" value="ECO:0000314"/>
    <property type="project" value="UniProtKB"/>
</dbReference>
<dbReference type="GO" id="GO:0015821">
    <property type="term" value="P:methionine transport"/>
    <property type="evidence" value="ECO:0000250"/>
    <property type="project" value="UniProtKB"/>
</dbReference>
<dbReference type="GO" id="GO:1905533">
    <property type="term" value="P:negative regulation of L-leucine import across plasma membrane"/>
    <property type="evidence" value="ECO:0007669"/>
    <property type="project" value="Ensembl"/>
</dbReference>
<dbReference type="GO" id="GO:0015823">
    <property type="term" value="P:phenylalanine transport"/>
    <property type="evidence" value="ECO:0000314"/>
    <property type="project" value="UniProtKB"/>
</dbReference>
<dbReference type="CDD" id="cd06174">
    <property type="entry name" value="MFS"/>
    <property type="match status" value="1"/>
</dbReference>
<dbReference type="Gene3D" id="1.20.1250.20">
    <property type="entry name" value="MFS general substrate transporter like domains"/>
    <property type="match status" value="1"/>
</dbReference>
<dbReference type="InterPro" id="IPR011701">
    <property type="entry name" value="MFS"/>
</dbReference>
<dbReference type="InterPro" id="IPR036259">
    <property type="entry name" value="MFS_trans_sf"/>
</dbReference>
<dbReference type="PANTHER" id="PTHR20766:SF2">
    <property type="entry name" value="LARGE NEUTRAL AMINO ACIDS TRANSPORTER SMALL SUBUNIT 4"/>
    <property type="match status" value="1"/>
</dbReference>
<dbReference type="PANTHER" id="PTHR20766">
    <property type="entry name" value="LARGE NEUTRAL AMINO ACIDS TRANSPORTER SMALL SUBUNIT 4-LIKE ISOFORM X1"/>
    <property type="match status" value="1"/>
</dbReference>
<dbReference type="Pfam" id="PF07690">
    <property type="entry name" value="MFS_1"/>
    <property type="match status" value="1"/>
</dbReference>
<dbReference type="SUPFAM" id="SSF103473">
    <property type="entry name" value="MFS general substrate transporter"/>
    <property type="match status" value="1"/>
</dbReference>